<organism>
    <name type="scientific">Mouse mammary tumor virus (strain BR6)</name>
    <name type="common">MMTV</name>
    <dbReference type="NCBI Taxonomy" id="11758"/>
    <lineage>
        <taxon>Viruses</taxon>
        <taxon>Riboviria</taxon>
        <taxon>Pararnavirae</taxon>
        <taxon>Artverviricota</taxon>
        <taxon>Revtraviricetes</taxon>
        <taxon>Ortervirales</taxon>
        <taxon>Retroviridae</taxon>
        <taxon>Orthoretrovirinae</taxon>
        <taxon>Betaretrovirus</taxon>
        <taxon>Mouse mammary tumor virus</taxon>
    </lineage>
</organism>
<protein>
    <recommendedName>
        <fullName>Envelope glycoprotein gp70</fullName>
    </recommendedName>
    <alternativeName>
        <fullName>Env polyprotein</fullName>
    </alternativeName>
    <component>
        <recommendedName>
            <fullName>Surface protein</fullName>
            <shortName>SU</shortName>
        </recommendedName>
        <alternativeName>
            <fullName>Glycoprotein 52</fullName>
            <shortName>gp52</shortName>
        </alternativeName>
    </component>
    <component>
        <recommendedName>
            <fullName>Transmembrane protein</fullName>
            <shortName>TM</shortName>
        </recommendedName>
        <alternativeName>
            <fullName>Glycoprotein 36</fullName>
            <shortName>gp36</shortName>
        </alternativeName>
    </component>
</protein>
<keyword id="KW-0165">Cleavage on pair of basic residues</keyword>
<keyword id="KW-0175">Coiled coil</keyword>
<keyword id="KW-1015">Disulfide bond</keyword>
<keyword id="KW-1169">Fusion of virus membrane with host cell membrane</keyword>
<keyword id="KW-1168">Fusion of virus membrane with host membrane</keyword>
<keyword id="KW-0325">Glycoprotein</keyword>
<keyword id="KW-1032">Host cell membrane</keyword>
<keyword id="KW-1043">Host membrane</keyword>
<keyword id="KW-0945">Host-virus interaction</keyword>
<keyword id="KW-0472">Membrane</keyword>
<keyword id="KW-1185">Reference proteome</keyword>
<keyword id="KW-0732">Signal</keyword>
<keyword id="KW-0812">Transmembrane</keyword>
<keyword id="KW-1133">Transmembrane helix</keyword>
<keyword id="KW-1161">Viral attachment to host cell</keyword>
<keyword id="KW-0261">Viral envelope protein</keyword>
<keyword id="KW-1162">Viral penetration into host cytoplasm</keyword>
<keyword id="KW-0946">Virion</keyword>
<keyword id="KW-1160">Virus entry into host cell</keyword>
<organismHost>
    <name type="scientific">Mus musculus</name>
    <name type="common">Mouse</name>
    <dbReference type="NCBI Taxonomy" id="10090"/>
</organismHost>
<sequence length="688" mass="77177">MPKHQSGSPTDSSDLLLSGKKQRPHLALRRKRRREMRKINRKVPRMNLVPIKEKTAWQHLQALISEAEEVLKTSQTPQTSLTLFLALLSVLGPPPVTGESYWAYLPKPPILHPVGWGSTDPIRVLTNQTMYLGGSPDFHGFRNMSGNVHFEGKSDTLPICLSFSFSTPTGCFQVDKQVFLSDTPTVDNNKPGGKGDKRRMWELWLTTLGNSGANTKLVPIKKKLPPKYPHCQIAFKKDAFWEGDESAPPRWLPCAFPDQGVSFSPKGALGLLWDFSLPSPSVDQSDQIKSKKNLFGNYTPPVNKEVHRWYEAGWVEPTWFWENSPKDPNDRDFTALVPHTELFRLVAASRHLILKRPGFQEHEMIPTSACVTYPYAILLGLPQLIDIEKRGSTFHISCSSCRLTNCLDSSAYDYAAIIVKRPPYVLLPVDIGDEPWFDDSAIQTFRYATDLIRAKRFVAAIILGISALIAIITSFAVATTALVKEMQTATFVNNLHRNVTLALSEQRIIDLKLEARLNALEEVVLELGQDVANLKTRMSTRCHANYDFICVTPLPYNATENWERTRAHLLGIWNDNEISYNIQELTNLISDMSKQHIDAVDLSGLAQSFANGVKALNPLDWTQYFIFIGVGALLLVIVLMIFPIVFQCLAKSLDQVQSDLNVLLLKKKKGGNAAPAAEMVELPRVSYT</sequence>
<comment type="function">
    <text evidence="1">The surface protein (SU) attaches the virus to the host cell by binding to its receptor. This interaction triggers the refolding of the transmembrane protein (TM) and is thought to activate its fusogenic potential by unmasking its fusion peptide. Fusion occurs at the host cell plasma membrane (By similarity).</text>
</comment>
<comment type="function">
    <text evidence="1">The transmembrane protein (TM) acts as a class I viral fusion protein. Under the current model, the protein has at least 3 conformational states: pre-fusion native state, pre-hairpin intermediate state, and post-fusion hairpin state. During viral and target cell membrane fusion, the coiled coil regions (heptad repeats) assume a trimer-of-hairpins structure, positioning the fusion peptide in close proximity to the C-terminal region of the ectodomain. The formation of this structure appears to drive apposition and subsequent fusion of viral and target cell membranes. Membranes fusion leads to delivery of the nucleocapsid into the cytoplasm (By similarity).</text>
</comment>
<comment type="subunit">
    <text evidence="1">The mature envelope protein (Env) consists of a trimer of SU-TM heterodimers attached by noncovalent interactions or by a labile interchain disulfide bond.</text>
</comment>
<comment type="subcellular location">
    <molecule>Transmembrane protein</molecule>
    <subcellularLocation>
        <location evidence="1">Virion membrane</location>
        <topology evidence="1">Single-pass type I membrane protein</topology>
    </subcellularLocation>
    <subcellularLocation>
        <location evidence="1">Host cell membrane</location>
        <topology evidence="1">Single-pass type I membrane protein</topology>
    </subcellularLocation>
</comment>
<comment type="subcellular location">
    <molecule>Surface protein</molecule>
    <subcellularLocation>
        <location>Virion membrane</location>
        <topology>Peripheral membrane protein</topology>
    </subcellularLocation>
    <subcellularLocation>
        <location evidence="1">Host cell membrane</location>
        <topology evidence="1">Peripheral membrane protein</topology>
    </subcellularLocation>
    <text evidence="1">The surface protein is not anchored to the viral envelope, but associates with the extravirion surface through its binding to TM. Both proteins are thought to be concentrated at the site of budding and incorporated into the virions possibly by contacts between the cytoplasmic tail of Env and the N-terminus of Gag (By similarity).</text>
</comment>
<comment type="PTM">
    <text evidence="1">Specific enzymatic cleavages in vivo yield mature proteins. Envelope glycoproteins are synthesized as an inactive precursor that is N-glycosylated and processed likely by host cell furin or by a furin-like protease in the Golgi to yield the mature SU and TM proteins. The cleavage site between SU and TM requires the minimal sequence [KR]-X-[KR]-R (By similarity).</text>
</comment>
<reference key="1">
    <citation type="journal article" date="1987" name="J. Virol.">
        <title>Complete nucleotide sequence of a milk-transmitted mouse mammary tumor virus: two frameshift suppression events are required for translation of gag and pol.</title>
        <authorList>
            <person name="Moore R."/>
            <person name="Dixon M."/>
            <person name="Smith R."/>
            <person name="Peters G."/>
            <person name="Dickson C."/>
        </authorList>
    </citation>
    <scope>NUCLEOTIDE SEQUENCE [GENOMIC RNA]</scope>
</reference>
<dbReference type="EMBL" id="M15122">
    <property type="protein sequence ID" value="AAA46544.1"/>
    <property type="molecule type" value="Genomic_RNA"/>
</dbReference>
<dbReference type="PIR" id="D26795">
    <property type="entry name" value="VCMVMM"/>
</dbReference>
<dbReference type="RefSeq" id="NP_056883.1">
    <property type="nucleotide sequence ID" value="NC_001503.1"/>
</dbReference>
<dbReference type="GlyCosmos" id="P10259">
    <property type="glycosylation" value="4 sites, No reported glycans"/>
</dbReference>
<dbReference type="ABCD" id="P10259">
    <property type="antibodies" value="3 sequenced antibodies"/>
</dbReference>
<dbReference type="GeneID" id="1491862"/>
<dbReference type="KEGG" id="vg:1491862"/>
<dbReference type="Proteomes" id="UP000228400">
    <property type="component" value="Genome"/>
</dbReference>
<dbReference type="GO" id="GO:0020002">
    <property type="term" value="C:host cell plasma membrane"/>
    <property type="evidence" value="ECO:0007669"/>
    <property type="project" value="UniProtKB-SubCell"/>
</dbReference>
<dbReference type="GO" id="GO:0016020">
    <property type="term" value="C:membrane"/>
    <property type="evidence" value="ECO:0007669"/>
    <property type="project" value="UniProtKB-KW"/>
</dbReference>
<dbReference type="GO" id="GO:0019031">
    <property type="term" value="C:viral envelope"/>
    <property type="evidence" value="ECO:0007669"/>
    <property type="project" value="UniProtKB-KW"/>
</dbReference>
<dbReference type="GO" id="GO:0055036">
    <property type="term" value="C:virion membrane"/>
    <property type="evidence" value="ECO:0007669"/>
    <property type="project" value="UniProtKB-SubCell"/>
</dbReference>
<dbReference type="GO" id="GO:0005198">
    <property type="term" value="F:structural molecule activity"/>
    <property type="evidence" value="ECO:0007669"/>
    <property type="project" value="InterPro"/>
</dbReference>
<dbReference type="GO" id="GO:0019064">
    <property type="term" value="P:fusion of virus membrane with host plasma membrane"/>
    <property type="evidence" value="ECO:0007669"/>
    <property type="project" value="UniProtKB-KW"/>
</dbReference>
<dbReference type="GO" id="GO:0046718">
    <property type="term" value="P:symbiont entry into host cell"/>
    <property type="evidence" value="ECO:0007669"/>
    <property type="project" value="UniProtKB-KW"/>
</dbReference>
<dbReference type="GO" id="GO:0019062">
    <property type="term" value="P:virion attachment to host cell"/>
    <property type="evidence" value="ECO:0007669"/>
    <property type="project" value="UniProtKB-KW"/>
</dbReference>
<dbReference type="CDD" id="cd09909">
    <property type="entry name" value="HIV-1-like_HR1-HR2"/>
    <property type="match status" value="1"/>
</dbReference>
<dbReference type="InterPro" id="IPR000328">
    <property type="entry name" value="GP41-like"/>
</dbReference>
<dbReference type="InterPro" id="IPR051255">
    <property type="entry name" value="Retroviral_env_glycoprotein"/>
</dbReference>
<dbReference type="PANTHER" id="PTHR34313">
    <property type="entry name" value="ENDOGENOUS RETROVIRUS GROUP K MEMBER 113 ENV POLYPROTEIN-RELATED"/>
    <property type="match status" value="1"/>
</dbReference>
<dbReference type="PANTHER" id="PTHR34313:SF2">
    <property type="entry name" value="ENDOGENOUS RETROVIRUS GROUP K MEMBER 21 ENV POLYPROTEIN-LIKE"/>
    <property type="match status" value="1"/>
</dbReference>
<dbReference type="Pfam" id="PF00517">
    <property type="entry name" value="GP41"/>
    <property type="match status" value="1"/>
</dbReference>
<gene>
    <name type="primary">env</name>
</gene>
<feature type="signal peptide" evidence="1">
    <location>
        <begin position="1"/>
        <end position="98"/>
    </location>
</feature>
<feature type="chain" id="PRO_0000239591" description="Envelope glycoprotein gp70">
    <location>
        <begin position="99"/>
        <end position="688"/>
    </location>
</feature>
<feature type="chain" id="PRO_0000040775" description="Surface protein" evidence="1">
    <location>
        <begin position="99"/>
        <end position="454"/>
    </location>
</feature>
<feature type="propeptide" id="PRO_0000040776" evidence="1">
    <location>
        <begin position="455"/>
        <end position="456"/>
    </location>
</feature>
<feature type="chain" id="PRO_0000040777" description="Transmembrane protein" evidence="1">
    <location>
        <begin position="457"/>
        <end position="688"/>
    </location>
</feature>
<feature type="topological domain" description="Extracellular" evidence="2">
    <location>
        <begin position="99"/>
        <end position="624"/>
    </location>
</feature>
<feature type="transmembrane region" description="Helical" evidence="2">
    <location>
        <begin position="625"/>
        <end position="645"/>
    </location>
</feature>
<feature type="topological domain" description="Cytoplasmic" evidence="2">
    <location>
        <begin position="646"/>
        <end position="688"/>
    </location>
</feature>
<feature type="region of interest" description="Disordered" evidence="3">
    <location>
        <begin position="1"/>
        <end position="37"/>
    </location>
</feature>
<feature type="region of interest" description="Fusion peptide" evidence="1">
    <location>
        <begin position="457"/>
        <end position="477"/>
    </location>
</feature>
<feature type="region of interest" description="Immunosuppression" evidence="1">
    <location>
        <begin position="463"/>
        <end position="481"/>
    </location>
</feature>
<feature type="coiled-coil region" evidence="2">
    <location>
        <begin position="426"/>
        <end position="474"/>
    </location>
</feature>
<feature type="coiled-coil region" evidence="2">
    <location>
        <begin position="511"/>
        <end position="541"/>
    </location>
</feature>
<feature type="compositionally biased region" description="Polar residues" evidence="3">
    <location>
        <begin position="1"/>
        <end position="15"/>
    </location>
</feature>
<feature type="compositionally biased region" description="Basic residues" evidence="3">
    <location>
        <begin position="20"/>
        <end position="37"/>
    </location>
</feature>
<feature type="site" description="Involved in binding to the cell receptor" evidence="1">
    <location>
        <position position="138"/>
    </location>
</feature>
<feature type="site" description="Cleavage; by host" evidence="1">
    <location>
        <begin position="454"/>
        <end position="455"/>
    </location>
</feature>
<feature type="glycosylation site" description="N-linked (GlcNAc...) asparagine; by host" evidence="2">
    <location>
        <position position="127"/>
    </location>
</feature>
<feature type="glycosylation site" description="N-linked (GlcNAc...) asparagine; by host" evidence="2">
    <location>
        <position position="143"/>
    </location>
</feature>
<feature type="glycosylation site" description="N-linked (GlcNAc...) asparagine; by host" evidence="2">
    <location>
        <position position="498"/>
    </location>
</feature>
<feature type="glycosylation site" description="N-linked (GlcNAc...) asparagine; by host" evidence="2">
    <location>
        <position position="557"/>
    </location>
</feature>
<accession>P10259</accession>
<proteinExistence type="inferred from homology"/>
<name>ENV_MMTVB</name>
<evidence type="ECO:0000250" key="1"/>
<evidence type="ECO:0000255" key="2"/>
<evidence type="ECO:0000256" key="3">
    <source>
        <dbReference type="SAM" id="MobiDB-lite"/>
    </source>
</evidence>